<dbReference type="EC" id="3.1.1.29" evidence="1"/>
<dbReference type="EMBL" id="AE017332">
    <property type="protein sequence ID" value="AAV27758.1"/>
    <property type="molecule type" value="Genomic_DNA"/>
</dbReference>
<dbReference type="RefSeq" id="WP_011206014.1">
    <property type="nucleotide sequence ID" value="NC_006360.1"/>
</dbReference>
<dbReference type="SMR" id="Q601M5"/>
<dbReference type="GeneID" id="41334502"/>
<dbReference type="KEGG" id="mhy:mhp177"/>
<dbReference type="eggNOG" id="COG0193">
    <property type="taxonomic scope" value="Bacteria"/>
</dbReference>
<dbReference type="HOGENOM" id="CLU_062456_4_1_14"/>
<dbReference type="PhylomeDB" id="Q601M5"/>
<dbReference type="Proteomes" id="UP000006822">
    <property type="component" value="Chromosome"/>
</dbReference>
<dbReference type="GO" id="GO:0005737">
    <property type="term" value="C:cytoplasm"/>
    <property type="evidence" value="ECO:0007669"/>
    <property type="project" value="UniProtKB-SubCell"/>
</dbReference>
<dbReference type="GO" id="GO:0004045">
    <property type="term" value="F:peptidyl-tRNA hydrolase activity"/>
    <property type="evidence" value="ECO:0007669"/>
    <property type="project" value="UniProtKB-UniRule"/>
</dbReference>
<dbReference type="GO" id="GO:0000049">
    <property type="term" value="F:tRNA binding"/>
    <property type="evidence" value="ECO:0007669"/>
    <property type="project" value="UniProtKB-UniRule"/>
</dbReference>
<dbReference type="GO" id="GO:0006515">
    <property type="term" value="P:protein quality control for misfolded or incompletely synthesized proteins"/>
    <property type="evidence" value="ECO:0007669"/>
    <property type="project" value="UniProtKB-UniRule"/>
</dbReference>
<dbReference type="GO" id="GO:0072344">
    <property type="term" value="P:rescue of stalled ribosome"/>
    <property type="evidence" value="ECO:0007669"/>
    <property type="project" value="UniProtKB-UniRule"/>
</dbReference>
<dbReference type="CDD" id="cd00462">
    <property type="entry name" value="PTH"/>
    <property type="match status" value="1"/>
</dbReference>
<dbReference type="Gene3D" id="3.40.50.1470">
    <property type="entry name" value="Peptidyl-tRNA hydrolase"/>
    <property type="match status" value="1"/>
</dbReference>
<dbReference type="HAMAP" id="MF_00083">
    <property type="entry name" value="Pept_tRNA_hydro_bact"/>
    <property type="match status" value="1"/>
</dbReference>
<dbReference type="InterPro" id="IPR001328">
    <property type="entry name" value="Pept_tRNA_hydro"/>
</dbReference>
<dbReference type="InterPro" id="IPR018171">
    <property type="entry name" value="Pept_tRNA_hydro_CS"/>
</dbReference>
<dbReference type="InterPro" id="IPR036416">
    <property type="entry name" value="Pept_tRNA_hydro_sf"/>
</dbReference>
<dbReference type="NCBIfam" id="TIGR00447">
    <property type="entry name" value="pth"/>
    <property type="match status" value="1"/>
</dbReference>
<dbReference type="PANTHER" id="PTHR17224">
    <property type="entry name" value="PEPTIDYL-TRNA HYDROLASE"/>
    <property type="match status" value="1"/>
</dbReference>
<dbReference type="PANTHER" id="PTHR17224:SF1">
    <property type="entry name" value="PEPTIDYL-TRNA HYDROLASE"/>
    <property type="match status" value="1"/>
</dbReference>
<dbReference type="Pfam" id="PF01195">
    <property type="entry name" value="Pept_tRNA_hydro"/>
    <property type="match status" value="1"/>
</dbReference>
<dbReference type="SUPFAM" id="SSF53178">
    <property type="entry name" value="Peptidyl-tRNA hydrolase-like"/>
    <property type="match status" value="1"/>
</dbReference>
<dbReference type="PROSITE" id="PS01195">
    <property type="entry name" value="PEPT_TRNA_HYDROL_1"/>
    <property type="match status" value="1"/>
</dbReference>
<proteinExistence type="inferred from homology"/>
<organism>
    <name type="scientific">Mesomycoplasma hyopneumoniae (strain 232)</name>
    <name type="common">Mycoplasma hyopneumoniae</name>
    <dbReference type="NCBI Taxonomy" id="295358"/>
    <lineage>
        <taxon>Bacteria</taxon>
        <taxon>Bacillati</taxon>
        <taxon>Mycoplasmatota</taxon>
        <taxon>Mycoplasmoidales</taxon>
        <taxon>Metamycoplasmataceae</taxon>
        <taxon>Mesomycoplasma</taxon>
    </lineage>
</organism>
<evidence type="ECO:0000255" key="1">
    <source>
        <dbReference type="HAMAP-Rule" id="MF_00083"/>
    </source>
</evidence>
<accession>Q601M5</accession>
<sequence>MKLIVGLGNPGEKYAKTKHNVGYWVLDLLAEKLALSFDQKTENGIYVKQPDFILAKPTTFMNKSGDFVEELIKFYKINTQDLMIIYDDMNFEVGQAAIKTTGSAGGQRGMAHIIEKCKTKEIKRLKIGISRGENAKEYVLSPFLPKDNAKIKLVIEEAANILIFYLSNSFITTIEKFNANKNKV</sequence>
<name>PTH_MESH2</name>
<keyword id="KW-0963">Cytoplasm</keyword>
<keyword id="KW-0378">Hydrolase</keyword>
<keyword id="KW-0694">RNA-binding</keyword>
<keyword id="KW-0820">tRNA-binding</keyword>
<comment type="function">
    <text evidence="1">Hydrolyzes ribosome-free peptidyl-tRNAs (with 1 or more amino acids incorporated), which drop off the ribosome during protein synthesis, or as a result of ribosome stalling.</text>
</comment>
<comment type="function">
    <text evidence="1">Catalyzes the release of premature peptidyl moieties from peptidyl-tRNA molecules trapped in stalled 50S ribosomal subunits, and thus maintains levels of free tRNAs and 50S ribosomes.</text>
</comment>
<comment type="catalytic activity">
    <reaction evidence="1">
        <text>an N-acyl-L-alpha-aminoacyl-tRNA + H2O = an N-acyl-L-amino acid + a tRNA + H(+)</text>
        <dbReference type="Rhea" id="RHEA:54448"/>
        <dbReference type="Rhea" id="RHEA-COMP:10123"/>
        <dbReference type="Rhea" id="RHEA-COMP:13883"/>
        <dbReference type="ChEBI" id="CHEBI:15377"/>
        <dbReference type="ChEBI" id="CHEBI:15378"/>
        <dbReference type="ChEBI" id="CHEBI:59874"/>
        <dbReference type="ChEBI" id="CHEBI:78442"/>
        <dbReference type="ChEBI" id="CHEBI:138191"/>
        <dbReference type="EC" id="3.1.1.29"/>
    </reaction>
</comment>
<comment type="subunit">
    <text evidence="1">Monomer.</text>
</comment>
<comment type="subcellular location">
    <subcellularLocation>
        <location evidence="1">Cytoplasm</location>
    </subcellularLocation>
</comment>
<comment type="similarity">
    <text evidence="1">Belongs to the PTH family.</text>
</comment>
<gene>
    <name evidence="1" type="primary">pth</name>
    <name type="ordered locus">mhp177</name>
</gene>
<reference key="1">
    <citation type="journal article" date="2004" name="J. Bacteriol.">
        <title>The genome sequence of Mycoplasma hyopneumoniae strain 232, the agent of swine mycoplasmosis.</title>
        <authorList>
            <person name="Minion F.C."/>
            <person name="Lefkowitz E.J."/>
            <person name="Madsen M.L."/>
            <person name="Cleary B.J."/>
            <person name="Swartzell S.M."/>
            <person name="Mahairas G.G."/>
        </authorList>
    </citation>
    <scope>NUCLEOTIDE SEQUENCE [LARGE SCALE GENOMIC DNA]</scope>
    <source>
        <strain>232</strain>
    </source>
</reference>
<feature type="chain" id="PRO_0000187772" description="Peptidyl-tRNA hydrolase">
    <location>
        <begin position="1"/>
        <end position="184"/>
    </location>
</feature>
<feature type="active site" description="Proton acceptor" evidence="1">
    <location>
        <position position="19"/>
    </location>
</feature>
<feature type="binding site" evidence="1">
    <location>
        <position position="14"/>
    </location>
    <ligand>
        <name>tRNA</name>
        <dbReference type="ChEBI" id="CHEBI:17843"/>
    </ligand>
</feature>
<feature type="binding site" evidence="1">
    <location>
        <position position="60"/>
    </location>
    <ligand>
        <name>tRNA</name>
        <dbReference type="ChEBI" id="CHEBI:17843"/>
    </ligand>
</feature>
<feature type="binding site" evidence="1">
    <location>
        <position position="62"/>
    </location>
    <ligand>
        <name>tRNA</name>
        <dbReference type="ChEBI" id="CHEBI:17843"/>
    </ligand>
</feature>
<feature type="site" description="Discriminates between blocked and unblocked aminoacyl-tRNA" evidence="1">
    <location>
        <position position="9"/>
    </location>
</feature>
<feature type="site" description="Stabilizes the basic form of H active site to accept a proton" evidence="1">
    <location>
        <position position="87"/>
    </location>
</feature>
<protein>
    <recommendedName>
        <fullName evidence="1">Peptidyl-tRNA hydrolase</fullName>
        <shortName evidence="1">Pth</shortName>
        <ecNumber evidence="1">3.1.1.29</ecNumber>
    </recommendedName>
</protein>